<organism>
    <name type="scientific">Caenorhabditis elegans</name>
    <dbReference type="NCBI Taxonomy" id="6239"/>
    <lineage>
        <taxon>Eukaryota</taxon>
        <taxon>Metazoa</taxon>
        <taxon>Ecdysozoa</taxon>
        <taxon>Nematoda</taxon>
        <taxon>Chromadorea</taxon>
        <taxon>Rhabditida</taxon>
        <taxon>Rhabditina</taxon>
        <taxon>Rhabditomorpha</taxon>
        <taxon>Rhabditoidea</taxon>
        <taxon>Rhabditidae</taxon>
        <taxon>Peloderinae</taxon>
        <taxon>Caenorhabditis</taxon>
    </lineage>
</organism>
<accession>P20271</accession>
<accession>Q9NBV6</accession>
<reference key="1">
    <citation type="journal article" date="2000" name="Neuron">
        <title>The LIM homeobox gene ceh-14 confers thermosensory function to the AFD neurons in Caenorhabditis elegans.</title>
        <authorList>
            <person name="Cassata G."/>
            <person name="Kagoshima H."/>
            <person name="Andachi Y."/>
            <person name="Kohara Y."/>
            <person name="Duerrenberger M.B."/>
            <person name="Hall D.H."/>
            <person name="Buerglin T.R."/>
        </authorList>
    </citation>
    <scope>NUCLEOTIDE SEQUENCE [MRNA]</scope>
    <scope>FUNCTION</scope>
    <scope>TISSUE SPECIFICITY</scope>
    <scope>SUBCELLULAR LOCATION</scope>
    <scope>DEVELOPMENTAL STAGE</scope>
    <source>
        <tissue>Embryo</tissue>
    </source>
</reference>
<reference key="2">
    <citation type="journal article" date="1998" name="Science">
        <title>Genome sequence of the nematode C. elegans: a platform for investigating biology.</title>
        <authorList>
            <consortium name="The C. elegans sequencing consortium"/>
        </authorList>
    </citation>
    <scope>NUCLEOTIDE SEQUENCE [LARGE SCALE GENOMIC DNA]</scope>
    <source>
        <strain>Bristol N2</strain>
    </source>
</reference>
<reference key="3">
    <citation type="journal article" date="1989" name="Nature">
        <title>Caenorhabditis elegans has scores of homoeobox-containing genes.</title>
        <authorList>
            <person name="Buerglin T.R."/>
            <person name="Finney M."/>
            <person name="Coulson A."/>
            <person name="Ruvkun G."/>
        </authorList>
    </citation>
    <scope>NUCLEOTIDE SEQUENCE [GENOMIC DNA] OF 198-239</scope>
</reference>
<reference key="4">
    <citation type="journal article" date="2003" name="Development">
        <title>Identification of spatial and temporal cues that regulate postembryonic expression of axon maintenance factors in the C. elegans ventral nerve cord.</title>
        <authorList>
            <person name="Aurelio O."/>
            <person name="Boulin T."/>
            <person name="Hobert O."/>
        </authorList>
    </citation>
    <scope>FUNCTION</scope>
    <scope>DEVELOPMENTAL STAGE</scope>
</reference>
<reference key="5">
    <citation type="journal article" date="2010" name="Development">
        <title>Paired and LIM class homeodomain proteins coordinate differentiation of the C. elegans ALA neuron.</title>
        <authorList>
            <person name="Van Buskirk C."/>
            <person name="Sternberg P.W."/>
        </authorList>
    </citation>
    <scope>FUNCTION</scope>
    <scope>TISSUE SPECIFICITY</scope>
    <scope>DISRUPTION PHENOTYPE</scope>
</reference>
<reference key="6">
    <citation type="journal article" date="2012" name="Gene">
        <title>A regulatory cascade of three transcription factors in a single specific neuron, DVC, in Caenorhabditis elegans.</title>
        <authorList>
            <person name="Feng H."/>
            <person name="Reece-Hoyes J.S."/>
            <person name="Walhout A.J."/>
            <person name="Hope I.A."/>
        </authorList>
    </citation>
    <scope>FUNCTION</scope>
    <scope>INTERACTION WITH CEH-63</scope>
    <scope>DISRUPTION PHENOTYPE</scope>
</reference>
<reference key="7">
    <citation type="journal article" date="2015" name="Dev. Biol.">
        <title>Co-expression of the transcription factors CEH-14 and TTX-1 regulates AFD neuron-specific genes gcy-8 and gcy-18 in C. elegans.</title>
        <authorList>
            <person name="Kagoshima H."/>
            <person name="Kohara Y."/>
        </authorList>
    </citation>
    <scope>FUNCTION</scope>
</reference>
<reference key="8">
    <citation type="journal article" date="2015" name="Dev. Cell">
        <title>A competition mechanism for a homeotic neuron identity transformation in C. elegans.</title>
        <authorList>
            <person name="Gordon P.M."/>
            <person name="Hobert O."/>
        </authorList>
    </citation>
    <scope>FUNCTION</scope>
    <scope>TISSUE SPECIFICITY</scope>
    <scope>DEVELOPMENTAL STAGE</scope>
</reference>
<reference evidence="10" key="9">
    <citation type="journal article" date="2017" name="Sci. Rep.">
        <title>Interactions between LHX3- and ISL1-family LIM-homeodomain transcription factors are conserved in Caenorhabditis elegans.</title>
        <authorList>
            <person name="Bhati M."/>
            <person name="Llamosas E."/>
            <person name="Jacques D.A."/>
            <person name="Jeffries C.M."/>
            <person name="Dastmalchi S."/>
            <person name="Ripin N."/>
            <person name="Nicholas H.R."/>
            <person name="Matthews J.M."/>
        </authorList>
    </citation>
    <scope>INTERACTION WITH LIM-7</scope>
    <scope>TISSUE SPECIFICITY</scope>
</reference>
<gene>
    <name type="primary">ceh-14</name>
    <name type="ORF">F46C8.5</name>
</gene>
<dbReference type="EMBL" id="AF244368">
    <property type="protein sequence ID" value="AAF77181.1"/>
    <property type="molecule type" value="mRNA"/>
</dbReference>
<dbReference type="EMBL" id="BX284606">
    <property type="protein sequence ID" value="CCD71294.1"/>
    <property type="molecule type" value="Genomic_DNA"/>
</dbReference>
<dbReference type="PIR" id="S05710">
    <property type="entry name" value="S05710"/>
</dbReference>
<dbReference type="RefSeq" id="NP_509273.1">
    <property type="nucleotide sequence ID" value="NM_076872.4"/>
</dbReference>
<dbReference type="SASBDB" id="P20271"/>
<dbReference type="SMR" id="P20271"/>
<dbReference type="BioGRID" id="45936">
    <property type="interactions" value="29"/>
</dbReference>
<dbReference type="FunCoup" id="P20271">
    <property type="interactions" value="194"/>
</dbReference>
<dbReference type="IntAct" id="P20271">
    <property type="interactions" value="26"/>
</dbReference>
<dbReference type="STRING" id="6239.F46C8.5.1"/>
<dbReference type="PaxDb" id="6239-F46C8.5"/>
<dbReference type="EnsemblMetazoa" id="F46C8.5.1">
    <property type="protein sequence ID" value="F46C8.5.1"/>
    <property type="gene ID" value="WBGene00000438"/>
</dbReference>
<dbReference type="GeneID" id="181012"/>
<dbReference type="KEGG" id="cel:CELE_F46C8.5"/>
<dbReference type="UCSC" id="F46C8.5">
    <property type="organism name" value="c. elegans"/>
</dbReference>
<dbReference type="AGR" id="WB:WBGene00000438"/>
<dbReference type="CTD" id="181012"/>
<dbReference type="WormBase" id="F46C8.5">
    <property type="protein sequence ID" value="CE28335"/>
    <property type="gene ID" value="WBGene00000438"/>
    <property type="gene designation" value="ceh-14"/>
</dbReference>
<dbReference type="eggNOG" id="KOG4577">
    <property type="taxonomic scope" value="Eukaryota"/>
</dbReference>
<dbReference type="GeneTree" id="ENSGT00940000167674"/>
<dbReference type="HOGENOM" id="CLU_027802_2_1_1"/>
<dbReference type="InParanoid" id="P20271"/>
<dbReference type="OMA" id="EFYLIAD"/>
<dbReference type="OrthoDB" id="10068367at2759"/>
<dbReference type="PhylomeDB" id="P20271"/>
<dbReference type="SignaLink" id="P20271"/>
<dbReference type="PRO" id="PR:P20271"/>
<dbReference type="Proteomes" id="UP000001940">
    <property type="component" value="Chromosome X"/>
</dbReference>
<dbReference type="Bgee" id="WBGene00000438">
    <property type="expression patterns" value="Expressed in pharyngeal muscle cell (C elegans) and 3 other cell types or tissues"/>
</dbReference>
<dbReference type="GO" id="GO:0005634">
    <property type="term" value="C:nucleus"/>
    <property type="evidence" value="ECO:0000314"/>
    <property type="project" value="UniProtKB"/>
</dbReference>
<dbReference type="GO" id="GO:0001228">
    <property type="term" value="F:DNA-binding transcription activator activity, RNA polymerase II-specific"/>
    <property type="evidence" value="ECO:0000250"/>
    <property type="project" value="WormBase"/>
</dbReference>
<dbReference type="GO" id="GO:0000981">
    <property type="term" value="F:DNA-binding transcription factor activity, RNA polymerase II-specific"/>
    <property type="evidence" value="ECO:0000318"/>
    <property type="project" value="GO_Central"/>
</dbReference>
<dbReference type="GO" id="GO:0000977">
    <property type="term" value="F:RNA polymerase II transcription regulatory region sequence-specific DNA binding"/>
    <property type="evidence" value="ECO:0000314"/>
    <property type="project" value="WormBase"/>
</dbReference>
<dbReference type="GO" id="GO:0008270">
    <property type="term" value="F:zinc ion binding"/>
    <property type="evidence" value="ECO:0007669"/>
    <property type="project" value="InterPro"/>
</dbReference>
<dbReference type="GO" id="GO:0048666">
    <property type="term" value="P:neuron development"/>
    <property type="evidence" value="ECO:0000315"/>
    <property type="project" value="WormBase"/>
</dbReference>
<dbReference type="GO" id="GO:0030182">
    <property type="term" value="P:neuron differentiation"/>
    <property type="evidence" value="ECO:0000315"/>
    <property type="project" value="UniProtKB"/>
</dbReference>
<dbReference type="GO" id="GO:0045944">
    <property type="term" value="P:positive regulation of transcription by RNA polymerase II"/>
    <property type="evidence" value="ECO:0000315"/>
    <property type="project" value="WormBase"/>
</dbReference>
<dbReference type="GO" id="GO:0006357">
    <property type="term" value="P:regulation of transcription by RNA polymerase II"/>
    <property type="evidence" value="ECO:0000318"/>
    <property type="project" value="GO_Central"/>
</dbReference>
<dbReference type="GO" id="GO:0040040">
    <property type="term" value="P:thermosensory behavior"/>
    <property type="evidence" value="ECO:0000315"/>
    <property type="project" value="WormBase"/>
</dbReference>
<dbReference type="CDD" id="cd00086">
    <property type="entry name" value="homeodomain"/>
    <property type="match status" value="1"/>
</dbReference>
<dbReference type="CDD" id="cd09376">
    <property type="entry name" value="LIM2_Lhx3_Lhx4"/>
    <property type="match status" value="1"/>
</dbReference>
<dbReference type="FunFam" id="1.10.10.60:FF:000219">
    <property type="entry name" value="LIM/homeobox protein Lhx3"/>
    <property type="match status" value="1"/>
</dbReference>
<dbReference type="FunFam" id="2.10.110.10:FF:000032">
    <property type="entry name" value="LIM/homeobox protein Lhx3"/>
    <property type="match status" value="1"/>
</dbReference>
<dbReference type="Gene3D" id="2.10.110.10">
    <property type="entry name" value="Cysteine Rich Protein"/>
    <property type="match status" value="2"/>
</dbReference>
<dbReference type="Gene3D" id="1.10.10.60">
    <property type="entry name" value="Homeodomain-like"/>
    <property type="match status" value="1"/>
</dbReference>
<dbReference type="InterPro" id="IPR001356">
    <property type="entry name" value="HD"/>
</dbReference>
<dbReference type="InterPro" id="IPR017970">
    <property type="entry name" value="Homeobox_CS"/>
</dbReference>
<dbReference type="InterPro" id="IPR009057">
    <property type="entry name" value="Homeodomain-like_sf"/>
</dbReference>
<dbReference type="InterPro" id="IPR049594">
    <property type="entry name" value="Lhx3/4-like_LIM2"/>
</dbReference>
<dbReference type="InterPro" id="IPR050453">
    <property type="entry name" value="LIM_Homeobox_TF"/>
</dbReference>
<dbReference type="InterPro" id="IPR001781">
    <property type="entry name" value="Znf_LIM"/>
</dbReference>
<dbReference type="PANTHER" id="PTHR24208">
    <property type="entry name" value="LIM/HOMEOBOX PROTEIN LHX"/>
    <property type="match status" value="1"/>
</dbReference>
<dbReference type="PANTHER" id="PTHR24208:SF128">
    <property type="entry name" value="LIM3, ISOFORM G"/>
    <property type="match status" value="1"/>
</dbReference>
<dbReference type="Pfam" id="PF00046">
    <property type="entry name" value="Homeodomain"/>
    <property type="match status" value="1"/>
</dbReference>
<dbReference type="Pfam" id="PF00412">
    <property type="entry name" value="LIM"/>
    <property type="match status" value="2"/>
</dbReference>
<dbReference type="SMART" id="SM00389">
    <property type="entry name" value="HOX"/>
    <property type="match status" value="1"/>
</dbReference>
<dbReference type="SMART" id="SM00132">
    <property type="entry name" value="LIM"/>
    <property type="match status" value="2"/>
</dbReference>
<dbReference type="SUPFAM" id="SSF57716">
    <property type="entry name" value="Glucocorticoid receptor-like (DNA-binding domain)"/>
    <property type="match status" value="1"/>
</dbReference>
<dbReference type="SUPFAM" id="SSF46689">
    <property type="entry name" value="Homeodomain-like"/>
    <property type="match status" value="1"/>
</dbReference>
<dbReference type="PROSITE" id="PS00027">
    <property type="entry name" value="HOMEOBOX_1"/>
    <property type="match status" value="1"/>
</dbReference>
<dbReference type="PROSITE" id="PS50071">
    <property type="entry name" value="HOMEOBOX_2"/>
    <property type="match status" value="1"/>
</dbReference>
<dbReference type="PROSITE" id="PS00478">
    <property type="entry name" value="LIM_DOMAIN_1"/>
    <property type="match status" value="2"/>
</dbReference>
<dbReference type="PROSITE" id="PS50023">
    <property type="entry name" value="LIM_DOMAIN_2"/>
    <property type="match status" value="2"/>
</dbReference>
<evidence type="ECO:0000255" key="1">
    <source>
        <dbReference type="PROSITE-ProRule" id="PRU00108"/>
    </source>
</evidence>
<evidence type="ECO:0000255" key="2">
    <source>
        <dbReference type="PROSITE-ProRule" id="PRU00125"/>
    </source>
</evidence>
<evidence type="ECO:0000256" key="3">
    <source>
        <dbReference type="SAM" id="MobiDB-lite"/>
    </source>
</evidence>
<evidence type="ECO:0000269" key="4">
    <source>
    </source>
</evidence>
<evidence type="ECO:0000269" key="5">
    <source>
    </source>
</evidence>
<evidence type="ECO:0000269" key="6">
    <source>
    </source>
</evidence>
<evidence type="ECO:0000269" key="7">
    <source>
    </source>
</evidence>
<evidence type="ECO:0000269" key="8">
    <source>
    </source>
</evidence>
<evidence type="ECO:0000269" key="9">
    <source>
    </source>
</evidence>
<evidence type="ECO:0000305" key="10"/>
<evidence type="ECO:0000312" key="11">
    <source>
        <dbReference type="WormBase" id="F46C8.5"/>
    </source>
</evidence>
<proteinExistence type="evidence at protein level"/>
<feature type="chain" id="PRO_0000075745" description="LIM/homeobox protein ceh-14">
    <location>
        <begin position="1"/>
        <end position="351"/>
    </location>
</feature>
<feature type="domain" description="LIM zinc-binding 1" evidence="2">
    <location>
        <begin position="46"/>
        <end position="105"/>
    </location>
</feature>
<feature type="domain" description="LIM zinc-binding 2" evidence="2">
    <location>
        <begin position="105"/>
        <end position="169"/>
    </location>
</feature>
<feature type="DNA-binding region" description="Homeobox" evidence="1">
    <location>
        <begin position="180"/>
        <end position="239"/>
    </location>
</feature>
<feature type="region of interest" description="Disordered" evidence="3">
    <location>
        <begin position="238"/>
        <end position="268"/>
    </location>
</feature>
<feature type="compositionally biased region" description="Basic and acidic residues" evidence="3">
    <location>
        <begin position="238"/>
        <end position="254"/>
    </location>
</feature>
<feature type="compositionally biased region" description="Polar residues" evidence="3">
    <location>
        <begin position="255"/>
        <end position="268"/>
    </location>
</feature>
<comment type="function">
    <text evidence="4 5 6 7">Probable transcription factor, modulating expression of helix-loop-helix protein mbr-1 and homeobox protein ceh-63, perhaps acting in concert with ceh-63 (PubMed:22207033). Binds to a motif including the sequence 5'-CTAAT-3' in regulatory promoter elements (PubMed:25614239). Confers thermosensory function to neurons (PubMed:10774727). Required for correct AFD-mediated thermotaxis (PubMed:10774727). In concert with homeobox protein ttx-1, perhaps as components in a complex, specifies identity of AFD neurons, acting by synergistically regulating receptor-type guanylyl cyclase gcy-8, gcy-18 and other genes (PubMed:25614239). Involved in postembryonic differentiation of the ALA neuron, and regulation of genes that contribute to behavioral quiescence, a sleep-like behavior mediated by ALA (PubMed:20501595). Regulates its own expression and also that of homeodomain ceh-17, together forming an autoregulatory loop in the ALA neuron (PubMed:20501595, PubMed:26096732). Required for initial pathfinding of the ALA axons, but largely dispensable for axon migration (PubMed:20501595). Involved in regulating postembryonic axon maintenance in the ventral nerve cord, acting in concert with LIM homeobox protein lim-6, via modulation of expression of immunoglobulin domain zig genes in the interneuron PVT (PubMed:12490565). Plays a role in controlling the peptidergic identity of the BDU neurons, regulating expression of flp-10, nlp-1, and nlp-15, thereby modulating the harsh touch response (PubMed:26096732).</text>
</comment>
<comment type="subunit">
    <text evidence="7 9">Interacts (via LIM zinc-binding domains 1 and 2) with lim-7 (via LID domain) (PubMed:28676648). May interact with itself (PubMed:22207033). May interact with homeobox protein ceh-63 (PubMed:22207033).</text>
</comment>
<comment type="interaction">
    <interactant intactId="EBI-2411837">
        <id>P20271</id>
    </interactant>
    <interactant intactId="EBI-324631">
        <id>G5EC36</id>
        <label>lim-7</label>
    </interactant>
    <organismsDiffer>false</organismsDiffer>
    <experiments>3</experiments>
</comment>
<comment type="subcellular location">
    <subcellularLocation>
        <location evidence="1 4">Nucleus</location>
    </subcellularLocation>
</comment>
<comment type="tissue specificity">
    <text evidence="4 6 8 9">Expressed in the anterior AFDL/R sensory neurons and BDUL/R and ALA interneurons, and in PVT, PVQL/R, DVC, PVNL/R, PVWL/R, PVR, PHCL/R, PHAL/R and PHBL/R cells in the tail region.</text>
</comment>
<comment type="developmental stage">
    <text evidence="4 5">Late embryonic, larval and adult stages (PubMed:10774727). Expressed in the interneuron PVT during embryogenesis (PubMed:12490565). Expressed in the BDU neuron in the three-fold embryonic stage at about 430 minutes of development (PubMed:26096732).</text>
</comment>
<comment type="disruption phenotype">
    <text evidence="6 7">RNAi-mediated knockdown causes severe defects in the ALA neuron in young adults (PubMed:20501595). RNAi-mediated knockdown abolishes expression of helix-loop-helix protein mbr-1 in the interneuron DVC (PubMed:22207033).</text>
</comment>
<keyword id="KW-0217">Developmental protein</keyword>
<keyword id="KW-0221">Differentiation</keyword>
<keyword id="KW-0238">DNA-binding</keyword>
<keyword id="KW-0371">Homeobox</keyword>
<keyword id="KW-0440">LIM domain</keyword>
<keyword id="KW-0479">Metal-binding</keyword>
<keyword id="KW-0524">Neurogenesis</keyword>
<keyword id="KW-0539">Nucleus</keyword>
<keyword id="KW-1185">Reference proteome</keyword>
<keyword id="KW-0677">Repeat</keyword>
<keyword id="KW-0862">Zinc</keyword>
<protein>
    <recommendedName>
        <fullName evidence="10">LIM/homeobox protein ceh-14</fullName>
    </recommendedName>
    <alternativeName>
        <fullName evidence="11">Homeobox protein ceh-14</fullName>
    </alternativeName>
</protein>
<name>HM14_CAEEL</name>
<sequence>MLGHNILTLGECDELDNHIVMCSTGLLSPQEDFSNVNAGHPNNEEAICSLCDKKIRDRFVSKVNGRCYHSSCLRCSTCKDELGATCFLREDSMYCRAHFYKKFGTKCSSCNEGIVPDHVVRKASNHVYHVECFQCFICKRSLETGEEFYLIADDARLVCKDDYEQARDKHCNELEGDGSNKRPRTTISAKSLETLKQAYQTSSKPARHVREQLASETGLDMRVVQVWFQNRRAKEKRLKKDAGRRWKSSNRAESDSNSPIESINGQSPNYLYLDHPMDDGNESNYLFHSREQTPDKYYRNETPSTDPPPMHMTTPSVLTTNFSTPLSLSTNVYNLPPPESQLIPHMTPQYI</sequence>